<protein>
    <recommendedName>
        <fullName evidence="1">Glutamyl-tRNA reductase</fullName>
        <shortName evidence="1">GluTR</shortName>
        <ecNumber evidence="1">1.2.1.70</ecNumber>
    </recommendedName>
</protein>
<accession>A8FFV4</accession>
<organism>
    <name type="scientific">Bacillus pumilus (strain SAFR-032)</name>
    <dbReference type="NCBI Taxonomy" id="315750"/>
    <lineage>
        <taxon>Bacteria</taxon>
        <taxon>Bacillati</taxon>
        <taxon>Bacillota</taxon>
        <taxon>Bacilli</taxon>
        <taxon>Bacillales</taxon>
        <taxon>Bacillaceae</taxon>
        <taxon>Bacillus</taxon>
    </lineage>
</organism>
<sequence>MHILVVGLDYKTAPVEIREQLSFEPSELGTAMSKLKEEKSILENIVISTCNRTEIYAVVDQLHTGRFYIKRFLADWFGLEKEDVSPYLKFYENDGAVEHLFRVACGLDSMVIGETQILGQVRSSFKVAQEEKTIGTVFNYLFKQAVTVAKRSHAETDIASNAVSVSYAAVELAKKIFGRLSDKHVLILGAGKMGELAAQNLQGQGIGQVTVINRTYEKAKELAGRFSGEPKSLNQLEKTLSEADILISSTGAKQFVITKEMVESANKKRKGRPLFMVDIAVPRDLDPAISEVEGAFLYDIDDLEGIVAANLKERRAVAEQVELLIEAEIVEFKQWLNTLGVVPVISALREKALTIQADTMQSIERKLPNLTHREMKLLNKHTKSIINQMLKDPILKAKEIAAEPNAEEKLLLFKEIFDLQVEDEEQKVEPVQVEQGSFQLFKPNMAQGFATVASE</sequence>
<evidence type="ECO:0000255" key="1">
    <source>
        <dbReference type="HAMAP-Rule" id="MF_00087"/>
    </source>
</evidence>
<proteinExistence type="inferred from homology"/>
<dbReference type="EC" id="1.2.1.70" evidence="1"/>
<dbReference type="EMBL" id="CP000813">
    <property type="protein sequence ID" value="ABV63121.1"/>
    <property type="molecule type" value="Genomic_DNA"/>
</dbReference>
<dbReference type="RefSeq" id="WP_012010780.1">
    <property type="nucleotide sequence ID" value="NZ_VEIS01000010.1"/>
</dbReference>
<dbReference type="SMR" id="A8FFV4"/>
<dbReference type="STRING" id="315750.BPUM_2458"/>
<dbReference type="GeneID" id="5621722"/>
<dbReference type="KEGG" id="bpu:BPUM_2458"/>
<dbReference type="eggNOG" id="COG0373">
    <property type="taxonomic scope" value="Bacteria"/>
</dbReference>
<dbReference type="HOGENOM" id="CLU_035113_2_2_9"/>
<dbReference type="OrthoDB" id="110209at2"/>
<dbReference type="UniPathway" id="UPA00251">
    <property type="reaction ID" value="UER00316"/>
</dbReference>
<dbReference type="Proteomes" id="UP000001355">
    <property type="component" value="Chromosome"/>
</dbReference>
<dbReference type="GO" id="GO:0008883">
    <property type="term" value="F:glutamyl-tRNA reductase activity"/>
    <property type="evidence" value="ECO:0007669"/>
    <property type="project" value="UniProtKB-UniRule"/>
</dbReference>
<dbReference type="GO" id="GO:0050661">
    <property type="term" value="F:NADP binding"/>
    <property type="evidence" value="ECO:0007669"/>
    <property type="project" value="InterPro"/>
</dbReference>
<dbReference type="GO" id="GO:0019353">
    <property type="term" value="P:protoporphyrinogen IX biosynthetic process from glutamate"/>
    <property type="evidence" value="ECO:0007669"/>
    <property type="project" value="TreeGrafter"/>
</dbReference>
<dbReference type="CDD" id="cd05213">
    <property type="entry name" value="NAD_bind_Glutamyl_tRNA_reduct"/>
    <property type="match status" value="1"/>
</dbReference>
<dbReference type="FunFam" id="3.30.460.30:FF:000001">
    <property type="entry name" value="Glutamyl-tRNA reductase"/>
    <property type="match status" value="1"/>
</dbReference>
<dbReference type="FunFam" id="3.40.50.720:FF:000031">
    <property type="entry name" value="Glutamyl-tRNA reductase"/>
    <property type="match status" value="1"/>
</dbReference>
<dbReference type="Gene3D" id="3.30.460.30">
    <property type="entry name" value="Glutamyl-tRNA reductase, N-terminal domain"/>
    <property type="match status" value="1"/>
</dbReference>
<dbReference type="Gene3D" id="3.40.50.720">
    <property type="entry name" value="NAD(P)-binding Rossmann-like Domain"/>
    <property type="match status" value="1"/>
</dbReference>
<dbReference type="HAMAP" id="MF_00087">
    <property type="entry name" value="Glu_tRNA_reductase"/>
    <property type="match status" value="1"/>
</dbReference>
<dbReference type="InterPro" id="IPR000343">
    <property type="entry name" value="4pyrrol_synth_GluRdtase"/>
</dbReference>
<dbReference type="InterPro" id="IPR015896">
    <property type="entry name" value="4pyrrol_synth_GluRdtase_dimer"/>
</dbReference>
<dbReference type="InterPro" id="IPR015895">
    <property type="entry name" value="4pyrrol_synth_GluRdtase_N"/>
</dbReference>
<dbReference type="InterPro" id="IPR018214">
    <property type="entry name" value="GluRdtase_CS"/>
</dbReference>
<dbReference type="InterPro" id="IPR036453">
    <property type="entry name" value="GluRdtase_dimer_dom_sf"/>
</dbReference>
<dbReference type="InterPro" id="IPR036343">
    <property type="entry name" value="GluRdtase_N_sf"/>
</dbReference>
<dbReference type="InterPro" id="IPR036291">
    <property type="entry name" value="NAD(P)-bd_dom_sf"/>
</dbReference>
<dbReference type="InterPro" id="IPR006151">
    <property type="entry name" value="Shikm_DH/Glu-tRNA_Rdtase"/>
</dbReference>
<dbReference type="NCBIfam" id="TIGR01035">
    <property type="entry name" value="hemA"/>
    <property type="match status" value="1"/>
</dbReference>
<dbReference type="NCBIfam" id="NF000744">
    <property type="entry name" value="PRK00045.1-3"/>
    <property type="match status" value="1"/>
</dbReference>
<dbReference type="PANTHER" id="PTHR43013">
    <property type="entry name" value="GLUTAMYL-TRNA REDUCTASE"/>
    <property type="match status" value="1"/>
</dbReference>
<dbReference type="PANTHER" id="PTHR43013:SF1">
    <property type="entry name" value="GLUTAMYL-TRNA REDUCTASE"/>
    <property type="match status" value="1"/>
</dbReference>
<dbReference type="Pfam" id="PF00745">
    <property type="entry name" value="GlutR_dimer"/>
    <property type="match status" value="1"/>
</dbReference>
<dbReference type="Pfam" id="PF05201">
    <property type="entry name" value="GlutR_N"/>
    <property type="match status" value="1"/>
</dbReference>
<dbReference type="Pfam" id="PF01488">
    <property type="entry name" value="Shikimate_DH"/>
    <property type="match status" value="1"/>
</dbReference>
<dbReference type="PIRSF" id="PIRSF000445">
    <property type="entry name" value="4pyrrol_synth_GluRdtase"/>
    <property type="match status" value="1"/>
</dbReference>
<dbReference type="SUPFAM" id="SSF69742">
    <property type="entry name" value="Glutamyl tRNA-reductase catalytic, N-terminal domain"/>
    <property type="match status" value="1"/>
</dbReference>
<dbReference type="SUPFAM" id="SSF69075">
    <property type="entry name" value="Glutamyl tRNA-reductase dimerization domain"/>
    <property type="match status" value="1"/>
</dbReference>
<dbReference type="SUPFAM" id="SSF51735">
    <property type="entry name" value="NAD(P)-binding Rossmann-fold domains"/>
    <property type="match status" value="1"/>
</dbReference>
<dbReference type="PROSITE" id="PS00747">
    <property type="entry name" value="GLUTR"/>
    <property type="match status" value="1"/>
</dbReference>
<keyword id="KW-0521">NADP</keyword>
<keyword id="KW-0560">Oxidoreductase</keyword>
<keyword id="KW-0627">Porphyrin biosynthesis</keyword>
<name>HEM1_BACP2</name>
<feature type="chain" id="PRO_1000057570" description="Glutamyl-tRNA reductase">
    <location>
        <begin position="1"/>
        <end position="455"/>
    </location>
</feature>
<feature type="active site" description="Nucleophile" evidence="1">
    <location>
        <position position="50"/>
    </location>
</feature>
<feature type="binding site" evidence="1">
    <location>
        <begin position="49"/>
        <end position="52"/>
    </location>
    <ligand>
        <name>substrate</name>
    </ligand>
</feature>
<feature type="binding site" evidence="1">
    <location>
        <position position="109"/>
    </location>
    <ligand>
        <name>substrate</name>
    </ligand>
</feature>
<feature type="binding site" evidence="1">
    <location>
        <begin position="114"/>
        <end position="116"/>
    </location>
    <ligand>
        <name>substrate</name>
    </ligand>
</feature>
<feature type="binding site" evidence="1">
    <location>
        <position position="120"/>
    </location>
    <ligand>
        <name>substrate</name>
    </ligand>
</feature>
<feature type="binding site" evidence="1">
    <location>
        <begin position="189"/>
        <end position="194"/>
    </location>
    <ligand>
        <name>NADP(+)</name>
        <dbReference type="ChEBI" id="CHEBI:58349"/>
    </ligand>
</feature>
<feature type="site" description="Important for activity" evidence="1">
    <location>
        <position position="99"/>
    </location>
</feature>
<reference key="1">
    <citation type="journal article" date="2007" name="PLoS ONE">
        <title>Paradoxical DNA repair and peroxide resistance gene conservation in Bacillus pumilus SAFR-032.</title>
        <authorList>
            <person name="Gioia J."/>
            <person name="Yerrapragada S."/>
            <person name="Qin X."/>
            <person name="Jiang H."/>
            <person name="Igboeli O.C."/>
            <person name="Muzny D."/>
            <person name="Dugan-Rocha S."/>
            <person name="Ding Y."/>
            <person name="Hawes A."/>
            <person name="Liu W."/>
            <person name="Perez L."/>
            <person name="Kovar C."/>
            <person name="Dinh H."/>
            <person name="Lee S."/>
            <person name="Nazareth L."/>
            <person name="Blyth P."/>
            <person name="Holder M."/>
            <person name="Buhay C."/>
            <person name="Tirumalai M.R."/>
            <person name="Liu Y."/>
            <person name="Dasgupta I."/>
            <person name="Bokhetache L."/>
            <person name="Fujita M."/>
            <person name="Karouia F."/>
            <person name="Eswara Moorthy P."/>
            <person name="Siefert J."/>
            <person name="Uzman A."/>
            <person name="Buzumbo P."/>
            <person name="Verma A."/>
            <person name="Zwiya H."/>
            <person name="McWilliams B.D."/>
            <person name="Olowu A."/>
            <person name="Clinkenbeard K.D."/>
            <person name="Newcombe D."/>
            <person name="Golebiewski L."/>
            <person name="Petrosino J.F."/>
            <person name="Nicholson W.L."/>
            <person name="Fox G.E."/>
            <person name="Venkateswaran K."/>
            <person name="Highlander S.K."/>
            <person name="Weinstock G.M."/>
        </authorList>
    </citation>
    <scope>NUCLEOTIDE SEQUENCE [LARGE SCALE GENOMIC DNA]</scope>
    <source>
        <strain>SAFR-032</strain>
    </source>
</reference>
<comment type="function">
    <text evidence="1">Catalyzes the NADPH-dependent reduction of glutamyl-tRNA(Glu) to glutamate 1-semialdehyde (GSA).</text>
</comment>
<comment type="catalytic activity">
    <reaction evidence="1">
        <text>(S)-4-amino-5-oxopentanoate + tRNA(Glu) + NADP(+) = L-glutamyl-tRNA(Glu) + NADPH + H(+)</text>
        <dbReference type="Rhea" id="RHEA:12344"/>
        <dbReference type="Rhea" id="RHEA-COMP:9663"/>
        <dbReference type="Rhea" id="RHEA-COMP:9680"/>
        <dbReference type="ChEBI" id="CHEBI:15378"/>
        <dbReference type="ChEBI" id="CHEBI:57501"/>
        <dbReference type="ChEBI" id="CHEBI:57783"/>
        <dbReference type="ChEBI" id="CHEBI:58349"/>
        <dbReference type="ChEBI" id="CHEBI:78442"/>
        <dbReference type="ChEBI" id="CHEBI:78520"/>
        <dbReference type="EC" id="1.2.1.70"/>
    </reaction>
</comment>
<comment type="pathway">
    <text evidence="1">Porphyrin-containing compound metabolism; protoporphyrin-IX biosynthesis; 5-aminolevulinate from L-glutamyl-tRNA(Glu): step 1/2.</text>
</comment>
<comment type="subunit">
    <text evidence="1">Homodimer.</text>
</comment>
<comment type="domain">
    <text evidence="1">Possesses an unusual extended V-shaped dimeric structure with each monomer consisting of three distinct domains arranged along a curved 'spinal' alpha-helix. The N-terminal catalytic domain specifically recognizes the glutamate moiety of the substrate. The second domain is the NADPH-binding domain, and the third C-terminal domain is responsible for dimerization.</text>
</comment>
<comment type="miscellaneous">
    <text evidence="1">During catalysis, the active site Cys acts as a nucleophile attacking the alpha-carbonyl group of tRNA-bound glutamate with the formation of a thioester intermediate between enzyme and glutamate, and the concomitant release of tRNA(Glu). The thioester intermediate is finally reduced by direct hydride transfer from NADPH, to form the product GSA.</text>
</comment>
<comment type="similarity">
    <text evidence="1">Belongs to the glutamyl-tRNA reductase family.</text>
</comment>
<gene>
    <name evidence="1" type="primary">hemA</name>
    <name type="ordered locus">BPUM_2458</name>
</gene>